<accession>Q0CTS9</accession>
<protein>
    <recommendedName>
        <fullName>Probable carboxypeptidase ATEG_02905</fullName>
        <ecNumber>3.4.17.-</ecNumber>
    </recommendedName>
    <alternativeName>
        <fullName>Peptidase M20 domain-containing protein ATEG_02905</fullName>
    </alternativeName>
</protein>
<comment type="cofactor">
    <cofactor evidence="1">
        <name>Zn(2+)</name>
        <dbReference type="ChEBI" id="CHEBI:29105"/>
    </cofactor>
    <text evidence="1">Binds 2 Zn(2+) ions per subunit.</text>
</comment>
<comment type="subcellular location">
    <subcellularLocation>
        <location evidence="4">Secreted</location>
    </subcellularLocation>
</comment>
<comment type="similarity">
    <text evidence="4">Belongs to the peptidase M20A family.</text>
</comment>
<keyword id="KW-0325">Glycoprotein</keyword>
<keyword id="KW-0378">Hydrolase</keyword>
<keyword id="KW-0479">Metal-binding</keyword>
<keyword id="KW-0645">Protease</keyword>
<keyword id="KW-1185">Reference proteome</keyword>
<keyword id="KW-0964">Secreted</keyword>
<keyword id="KW-0732">Signal</keyword>
<keyword id="KW-0862">Zinc</keyword>
<organism>
    <name type="scientific">Aspergillus terreus (strain NIH 2624 / FGSC A1156)</name>
    <dbReference type="NCBI Taxonomy" id="341663"/>
    <lineage>
        <taxon>Eukaryota</taxon>
        <taxon>Fungi</taxon>
        <taxon>Dikarya</taxon>
        <taxon>Ascomycota</taxon>
        <taxon>Pezizomycotina</taxon>
        <taxon>Eurotiomycetes</taxon>
        <taxon>Eurotiomycetidae</taxon>
        <taxon>Eurotiales</taxon>
        <taxon>Aspergillaceae</taxon>
        <taxon>Aspergillus</taxon>
        <taxon>Aspergillus subgen. Circumdati</taxon>
    </lineage>
</organism>
<proteinExistence type="inferred from homology"/>
<dbReference type="EC" id="3.4.17.-"/>
<dbReference type="EMBL" id="CH476597">
    <property type="protein sequence ID" value="EAU36179.1"/>
    <property type="molecule type" value="Genomic_DNA"/>
</dbReference>
<dbReference type="RefSeq" id="XP_001212083.1">
    <property type="nucleotide sequence ID" value="XM_001212083.1"/>
</dbReference>
<dbReference type="SMR" id="Q0CTS9"/>
<dbReference type="STRING" id="341663.Q0CTS9"/>
<dbReference type="EnsemblFungi" id="EAU36179">
    <property type="protein sequence ID" value="EAU36179"/>
    <property type="gene ID" value="ATEG_02905"/>
</dbReference>
<dbReference type="GeneID" id="4317488"/>
<dbReference type="VEuPathDB" id="FungiDB:ATEG_02905"/>
<dbReference type="eggNOG" id="KOG2275">
    <property type="taxonomic scope" value="Eukaryota"/>
</dbReference>
<dbReference type="HOGENOM" id="CLU_021802_3_0_1"/>
<dbReference type="OMA" id="RLHKGVM"/>
<dbReference type="OrthoDB" id="3064516at2759"/>
<dbReference type="Proteomes" id="UP000007963">
    <property type="component" value="Unassembled WGS sequence"/>
</dbReference>
<dbReference type="GO" id="GO:0005576">
    <property type="term" value="C:extracellular region"/>
    <property type="evidence" value="ECO:0007669"/>
    <property type="project" value="UniProtKB-SubCell"/>
</dbReference>
<dbReference type="GO" id="GO:0046872">
    <property type="term" value="F:metal ion binding"/>
    <property type="evidence" value="ECO:0007669"/>
    <property type="project" value="UniProtKB-KW"/>
</dbReference>
<dbReference type="GO" id="GO:0008233">
    <property type="term" value="F:peptidase activity"/>
    <property type="evidence" value="ECO:0007669"/>
    <property type="project" value="UniProtKB-KW"/>
</dbReference>
<dbReference type="GO" id="GO:0006508">
    <property type="term" value="P:proteolysis"/>
    <property type="evidence" value="ECO:0007669"/>
    <property type="project" value="UniProtKB-KW"/>
</dbReference>
<dbReference type="CDD" id="cd05652">
    <property type="entry name" value="M20_ArgE_DapE-like_fungal"/>
    <property type="match status" value="1"/>
</dbReference>
<dbReference type="Gene3D" id="3.30.70.360">
    <property type="match status" value="1"/>
</dbReference>
<dbReference type="Gene3D" id="3.40.630.10">
    <property type="entry name" value="Zn peptidases"/>
    <property type="match status" value="1"/>
</dbReference>
<dbReference type="InterPro" id="IPR001261">
    <property type="entry name" value="ArgE/DapE_CS"/>
</dbReference>
<dbReference type="InterPro" id="IPR036264">
    <property type="entry name" value="Bact_exopeptidase_dim_dom"/>
</dbReference>
<dbReference type="InterPro" id="IPR002933">
    <property type="entry name" value="Peptidase_M20"/>
</dbReference>
<dbReference type="InterPro" id="IPR011650">
    <property type="entry name" value="Peptidase_M20_dimer"/>
</dbReference>
<dbReference type="InterPro" id="IPR050072">
    <property type="entry name" value="Peptidase_M20A"/>
</dbReference>
<dbReference type="PANTHER" id="PTHR43808">
    <property type="entry name" value="ACETYLORNITHINE DEACETYLASE"/>
    <property type="match status" value="1"/>
</dbReference>
<dbReference type="PANTHER" id="PTHR43808:SF8">
    <property type="entry name" value="PEPTIDASE M20 DIMERISATION DOMAIN-CONTAINING PROTEIN"/>
    <property type="match status" value="1"/>
</dbReference>
<dbReference type="Pfam" id="PF07687">
    <property type="entry name" value="M20_dimer"/>
    <property type="match status" value="1"/>
</dbReference>
<dbReference type="Pfam" id="PF01546">
    <property type="entry name" value="Peptidase_M20"/>
    <property type="match status" value="1"/>
</dbReference>
<dbReference type="SUPFAM" id="SSF55031">
    <property type="entry name" value="Bacterial exopeptidase dimerisation domain"/>
    <property type="match status" value="1"/>
</dbReference>
<dbReference type="SUPFAM" id="SSF53187">
    <property type="entry name" value="Zn-dependent exopeptidases"/>
    <property type="match status" value="1"/>
</dbReference>
<dbReference type="PROSITE" id="PS00758">
    <property type="entry name" value="ARGE_DAPE_CPG2_1"/>
    <property type="match status" value="1"/>
</dbReference>
<dbReference type="PROSITE" id="PS00759">
    <property type="entry name" value="ARGE_DAPE_CPG2_2"/>
    <property type="match status" value="1"/>
</dbReference>
<gene>
    <name type="ORF">ATEG_02905</name>
</gene>
<evidence type="ECO:0000250" key="1"/>
<evidence type="ECO:0000255" key="2"/>
<evidence type="ECO:0000256" key="3">
    <source>
        <dbReference type="SAM" id="MobiDB-lite"/>
    </source>
</evidence>
<evidence type="ECO:0000305" key="4"/>
<feature type="signal peptide" evidence="2">
    <location>
        <begin position="1"/>
        <end position="18"/>
    </location>
</feature>
<feature type="chain" id="PRO_0000411232" description="Probable carboxypeptidase ATEG_02905">
    <location>
        <begin position="19"/>
        <end position="433"/>
    </location>
</feature>
<feature type="region of interest" description="Disordered" evidence="3">
    <location>
        <begin position="20"/>
        <end position="40"/>
    </location>
</feature>
<feature type="active site" description="Proton acceptor" evidence="1">
    <location>
        <position position="193"/>
    </location>
</feature>
<feature type="binding site" evidence="1">
    <location>
        <position position="161"/>
    </location>
    <ligand>
        <name>Zn(2+)</name>
        <dbReference type="ChEBI" id="CHEBI:29105"/>
        <label>1</label>
    </ligand>
</feature>
<feature type="binding site" evidence="1">
    <location>
        <position position="161"/>
    </location>
    <ligand>
        <name>Zn(2+)</name>
        <dbReference type="ChEBI" id="CHEBI:29105"/>
        <label>2</label>
    </ligand>
</feature>
<feature type="binding site" evidence="1">
    <location>
        <position position="194"/>
    </location>
    <ligand>
        <name>Zn(2+)</name>
        <dbReference type="ChEBI" id="CHEBI:29105"/>
        <label>1</label>
    </ligand>
</feature>
<feature type="glycosylation site" description="N-linked (GlcNAc...) asparagine" evidence="2">
    <location>
        <position position="92"/>
    </location>
</feature>
<name>P20D1_ASPTN</name>
<sequence>MKSAISLLLASAATYVGASPHPEPPQLVLSPSTSTGVHGDEATSAIASSAADDVISDSPFLSFHRDLVQISSISGHERKAGDFVAEFLQAHNFTVVKQPVPSKDGRQPDEDRFNVFAYPSGASAAPKILLTSHIDTVPPFIPYSAARVDNDIRISGRGSVDAKGSVAAQVFAALDILERDPSAPLGLLFVVDEEVGGTGMKVFSDSSLNPSPSPFRAVIFGEPTDLALVSGHKGMLGFELVATGQAAHSGYPWLGHSAVSALLPALLRVDRLGDIPAQEGGLPSSPKYGRTTVNIGRMEGGVAANVVPASAHANVAVRLAAGTPDEARDIVRRAVRDATGGDENVYPDFSEWSEGYPPQDLDTDVDGFEVTTVNYGTDVPNLRIHERADGAPVRRYLYGPGSIHVAHGDHEAITVAQLEEALQGYRKLIEAAM</sequence>
<reference key="1">
    <citation type="submission" date="2005-09" db="EMBL/GenBank/DDBJ databases">
        <title>Annotation of the Aspergillus terreus NIH2624 genome.</title>
        <authorList>
            <person name="Birren B.W."/>
            <person name="Lander E.S."/>
            <person name="Galagan J.E."/>
            <person name="Nusbaum C."/>
            <person name="Devon K."/>
            <person name="Henn M."/>
            <person name="Ma L.-J."/>
            <person name="Jaffe D.B."/>
            <person name="Butler J."/>
            <person name="Alvarez P."/>
            <person name="Gnerre S."/>
            <person name="Grabherr M."/>
            <person name="Kleber M."/>
            <person name="Mauceli E.W."/>
            <person name="Brockman W."/>
            <person name="Rounsley S."/>
            <person name="Young S.K."/>
            <person name="LaButti K."/>
            <person name="Pushparaj V."/>
            <person name="DeCaprio D."/>
            <person name="Crawford M."/>
            <person name="Koehrsen M."/>
            <person name="Engels R."/>
            <person name="Montgomery P."/>
            <person name="Pearson M."/>
            <person name="Howarth C."/>
            <person name="Larson L."/>
            <person name="Luoma S."/>
            <person name="White J."/>
            <person name="Alvarado L."/>
            <person name="Kodira C.D."/>
            <person name="Zeng Q."/>
            <person name="Oleary S."/>
            <person name="Yandava C."/>
            <person name="Denning D.W."/>
            <person name="Nierman W.C."/>
            <person name="Milne T."/>
            <person name="Madden K."/>
        </authorList>
    </citation>
    <scope>NUCLEOTIDE SEQUENCE [LARGE SCALE GENOMIC DNA]</scope>
    <source>
        <strain>NIH 2624 / FGSC A1156</strain>
    </source>
</reference>